<gene>
    <name evidence="1" type="primary">yidC</name>
    <name type="ordered locus">VC_0004</name>
</gene>
<evidence type="ECO:0000255" key="1">
    <source>
        <dbReference type="HAMAP-Rule" id="MF_01810"/>
    </source>
</evidence>
<evidence type="ECO:0000256" key="2">
    <source>
        <dbReference type="SAM" id="MobiDB-lite"/>
    </source>
</evidence>
<dbReference type="EMBL" id="AE003852">
    <property type="protein sequence ID" value="AAF93182.1"/>
    <property type="molecule type" value="Genomic_DNA"/>
</dbReference>
<dbReference type="PIR" id="E82375">
    <property type="entry name" value="E82375"/>
</dbReference>
<dbReference type="RefSeq" id="NP_062588.1">
    <property type="nucleotide sequence ID" value="NC_002505.1"/>
</dbReference>
<dbReference type="RefSeq" id="WP_000378235.1">
    <property type="nucleotide sequence ID" value="NZ_LT906614.1"/>
</dbReference>
<dbReference type="SMR" id="Q9KVY4"/>
<dbReference type="STRING" id="243277.VC_0004"/>
<dbReference type="DNASU" id="2615298"/>
<dbReference type="EnsemblBacteria" id="AAF93182">
    <property type="protein sequence ID" value="AAF93182"/>
    <property type="gene ID" value="VC_0004"/>
</dbReference>
<dbReference type="KEGG" id="vch:VC_0004"/>
<dbReference type="PATRIC" id="fig|243277.26.peg.3"/>
<dbReference type="eggNOG" id="COG0706">
    <property type="taxonomic scope" value="Bacteria"/>
</dbReference>
<dbReference type="HOGENOM" id="CLU_016535_3_0_6"/>
<dbReference type="Proteomes" id="UP000000584">
    <property type="component" value="Chromosome 1"/>
</dbReference>
<dbReference type="GO" id="GO:0005886">
    <property type="term" value="C:plasma membrane"/>
    <property type="evidence" value="ECO:0000318"/>
    <property type="project" value="GO_Central"/>
</dbReference>
<dbReference type="GO" id="GO:0032977">
    <property type="term" value="F:membrane insertase activity"/>
    <property type="evidence" value="ECO:0000318"/>
    <property type="project" value="GO_Central"/>
</dbReference>
<dbReference type="GO" id="GO:0051205">
    <property type="term" value="P:protein insertion into membrane"/>
    <property type="evidence" value="ECO:0000318"/>
    <property type="project" value="GO_Central"/>
</dbReference>
<dbReference type="GO" id="GO:0015031">
    <property type="term" value="P:protein transport"/>
    <property type="evidence" value="ECO:0007669"/>
    <property type="project" value="UniProtKB-KW"/>
</dbReference>
<dbReference type="CDD" id="cd20070">
    <property type="entry name" value="5TM_YidC_Alb3"/>
    <property type="match status" value="1"/>
</dbReference>
<dbReference type="CDD" id="cd19961">
    <property type="entry name" value="EcYidC-like_peri"/>
    <property type="match status" value="1"/>
</dbReference>
<dbReference type="FunFam" id="2.70.98.90:FF:000001">
    <property type="entry name" value="Membrane protein insertase YidC"/>
    <property type="match status" value="1"/>
</dbReference>
<dbReference type="Gene3D" id="2.70.98.90">
    <property type="match status" value="1"/>
</dbReference>
<dbReference type="HAMAP" id="MF_01810">
    <property type="entry name" value="YidC_type1"/>
    <property type="match status" value="1"/>
</dbReference>
<dbReference type="InterPro" id="IPR019998">
    <property type="entry name" value="Membr_insert_YidC"/>
</dbReference>
<dbReference type="InterPro" id="IPR028053">
    <property type="entry name" value="Membr_insert_YidC_N"/>
</dbReference>
<dbReference type="InterPro" id="IPR001708">
    <property type="entry name" value="YidC/ALB3/OXA1/COX18"/>
</dbReference>
<dbReference type="InterPro" id="IPR028055">
    <property type="entry name" value="YidC/Oxa/ALB_C"/>
</dbReference>
<dbReference type="InterPro" id="IPR047196">
    <property type="entry name" value="YidC_ALB_C"/>
</dbReference>
<dbReference type="InterPro" id="IPR038221">
    <property type="entry name" value="YidC_periplasmic_sf"/>
</dbReference>
<dbReference type="NCBIfam" id="NF002351">
    <property type="entry name" value="PRK01318.1-1"/>
    <property type="match status" value="1"/>
</dbReference>
<dbReference type="NCBIfam" id="NF002352">
    <property type="entry name" value="PRK01318.1-3"/>
    <property type="match status" value="1"/>
</dbReference>
<dbReference type="NCBIfam" id="TIGR03593">
    <property type="entry name" value="yidC_nterm"/>
    <property type="match status" value="1"/>
</dbReference>
<dbReference type="NCBIfam" id="TIGR03592">
    <property type="entry name" value="yidC_oxa1_cterm"/>
    <property type="match status" value="1"/>
</dbReference>
<dbReference type="PANTHER" id="PTHR12428:SF65">
    <property type="entry name" value="CYTOCHROME C OXIDASE ASSEMBLY PROTEIN COX18, MITOCHONDRIAL"/>
    <property type="match status" value="1"/>
</dbReference>
<dbReference type="PANTHER" id="PTHR12428">
    <property type="entry name" value="OXA1"/>
    <property type="match status" value="1"/>
</dbReference>
<dbReference type="Pfam" id="PF02096">
    <property type="entry name" value="60KD_IMP"/>
    <property type="match status" value="1"/>
</dbReference>
<dbReference type="Pfam" id="PF14849">
    <property type="entry name" value="YidC_periplas"/>
    <property type="match status" value="1"/>
</dbReference>
<dbReference type="PRINTS" id="PR00701">
    <property type="entry name" value="60KDINNERMP"/>
</dbReference>
<dbReference type="PRINTS" id="PR01900">
    <property type="entry name" value="YIDCPROTEIN"/>
</dbReference>
<sequence length="541" mass="60621">MDSQRNILLIALALVSFLLFQQWQVAKNPAPQATQQAQSTGAAPAPSFSDELDPTPAQNVAAKAKTITVSTDVLTLSIDTLGGDVVSAKLNQYSEELNSPESFVLLQNTQGHQFIAQSGLVGPQGIDVTSNNRPAYQVSADSFTLAEGQDELRIPMTYQANGIDYTKTFILKRGSYAVDVVFDVANNSGSEATLGMYAHLRQNLLDSGGNLAMPTYRGGAYSTSDVRYKKYSFDDMKDRNLSAPNDVTVNWVAMIQHYFASAWIPRDEPQAQLYSRVINNLGDMGIRTPNKTIANGDKAEFEATLWVGPKLQDQMAATAPNLDLVVDYGWLWFIAKPLHWLLSVIQTFVGNWGVAIICLTFIVRGAMYPLTKAQYTSMAKMRMLQPKLQAMRERIGDDRQRMSQEMMELYKKEKVNPLGGCLPILLQMPIFIALYWALMESVELRHSPFFGWIHDLSAQDPYYILPLLMGASMFVIQKMSPTTITDPMQQKIMTFMPVMFTFFFLWFPSGLVLYWLVSNIVTLIQQTLIYKALEKKGLHSK</sequence>
<protein>
    <recommendedName>
        <fullName evidence="1">Membrane protein insertase YidC</fullName>
    </recommendedName>
    <alternativeName>
        <fullName evidence="1">Foldase YidC</fullName>
    </alternativeName>
    <alternativeName>
        <fullName evidence="1">Membrane integrase YidC</fullName>
    </alternativeName>
    <alternativeName>
        <fullName evidence="1">Membrane protein YidC</fullName>
    </alternativeName>
</protein>
<reference key="1">
    <citation type="journal article" date="2000" name="Nature">
        <title>DNA sequence of both chromosomes of the cholera pathogen Vibrio cholerae.</title>
        <authorList>
            <person name="Heidelberg J.F."/>
            <person name="Eisen J.A."/>
            <person name="Nelson W.C."/>
            <person name="Clayton R.A."/>
            <person name="Gwinn M.L."/>
            <person name="Dodson R.J."/>
            <person name="Haft D.H."/>
            <person name="Hickey E.K."/>
            <person name="Peterson J.D."/>
            <person name="Umayam L.A."/>
            <person name="Gill S.R."/>
            <person name="Nelson K.E."/>
            <person name="Read T.D."/>
            <person name="Tettelin H."/>
            <person name="Richardson D.L."/>
            <person name="Ermolaeva M.D."/>
            <person name="Vamathevan J.J."/>
            <person name="Bass S."/>
            <person name="Qin H."/>
            <person name="Dragoi I."/>
            <person name="Sellers P."/>
            <person name="McDonald L.A."/>
            <person name="Utterback T.R."/>
            <person name="Fleischmann R.D."/>
            <person name="Nierman W.C."/>
            <person name="White O."/>
            <person name="Salzberg S.L."/>
            <person name="Smith H.O."/>
            <person name="Colwell R.R."/>
            <person name="Mekalanos J.J."/>
            <person name="Venter J.C."/>
            <person name="Fraser C.M."/>
        </authorList>
    </citation>
    <scope>NUCLEOTIDE SEQUENCE [LARGE SCALE GENOMIC DNA]</scope>
    <source>
        <strain>ATCC 39315 / El Tor Inaba N16961</strain>
    </source>
</reference>
<accession>Q9KVY4</accession>
<proteinExistence type="inferred from homology"/>
<name>YIDC_VIBCH</name>
<organism>
    <name type="scientific">Vibrio cholerae serotype O1 (strain ATCC 39315 / El Tor Inaba N16961)</name>
    <dbReference type="NCBI Taxonomy" id="243277"/>
    <lineage>
        <taxon>Bacteria</taxon>
        <taxon>Pseudomonadati</taxon>
        <taxon>Pseudomonadota</taxon>
        <taxon>Gammaproteobacteria</taxon>
        <taxon>Vibrionales</taxon>
        <taxon>Vibrionaceae</taxon>
        <taxon>Vibrio</taxon>
    </lineage>
</organism>
<comment type="function">
    <text evidence="1">Required for the insertion and/or proper folding and/or complex formation of integral membrane proteins into the membrane. Involved in integration of membrane proteins that insert both dependently and independently of the Sec translocase complex, as well as at least some lipoproteins. Aids folding of multispanning membrane proteins.</text>
</comment>
<comment type="subunit">
    <text evidence="1">Interacts with the Sec translocase complex via SecD. Specifically interacts with transmembrane segments of nascent integral membrane proteins during membrane integration.</text>
</comment>
<comment type="subcellular location">
    <subcellularLocation>
        <location evidence="1">Cell inner membrane</location>
        <topology evidence="1">Multi-pass membrane protein</topology>
    </subcellularLocation>
</comment>
<comment type="similarity">
    <text evidence="1">Belongs to the OXA1/ALB3/YidC family. Type 1 subfamily.</text>
</comment>
<keyword id="KW-0997">Cell inner membrane</keyword>
<keyword id="KW-1003">Cell membrane</keyword>
<keyword id="KW-0143">Chaperone</keyword>
<keyword id="KW-0472">Membrane</keyword>
<keyword id="KW-0653">Protein transport</keyword>
<keyword id="KW-1185">Reference proteome</keyword>
<keyword id="KW-0812">Transmembrane</keyword>
<keyword id="KW-1133">Transmembrane helix</keyword>
<keyword id="KW-0813">Transport</keyword>
<feature type="chain" id="PRO_0000124765" description="Membrane protein insertase YidC">
    <location>
        <begin position="1"/>
        <end position="541"/>
    </location>
</feature>
<feature type="transmembrane region" description="Helical" evidence="1">
    <location>
        <begin position="6"/>
        <end position="26"/>
    </location>
</feature>
<feature type="transmembrane region" description="Helical" evidence="1">
    <location>
        <begin position="343"/>
        <end position="363"/>
    </location>
</feature>
<feature type="transmembrane region" description="Helical" evidence="1">
    <location>
        <begin position="418"/>
        <end position="438"/>
    </location>
</feature>
<feature type="transmembrane region" description="Helical" evidence="1">
    <location>
        <begin position="456"/>
        <end position="476"/>
    </location>
</feature>
<feature type="transmembrane region" description="Helical" evidence="1">
    <location>
        <begin position="497"/>
        <end position="517"/>
    </location>
</feature>
<feature type="region of interest" description="Disordered" evidence="2">
    <location>
        <begin position="31"/>
        <end position="55"/>
    </location>
</feature>
<feature type="compositionally biased region" description="Low complexity" evidence="2">
    <location>
        <begin position="31"/>
        <end position="47"/>
    </location>
</feature>